<organism>
    <name type="scientific">Nitratiruptor sp. (strain SB155-2)</name>
    <dbReference type="NCBI Taxonomy" id="387092"/>
    <lineage>
        <taxon>Bacteria</taxon>
        <taxon>Pseudomonadati</taxon>
        <taxon>Campylobacterota</taxon>
        <taxon>Epsilonproteobacteria</taxon>
        <taxon>Nautiliales</taxon>
        <taxon>Nitratiruptoraceae</taxon>
        <taxon>Nitratiruptor</taxon>
    </lineage>
</organism>
<feature type="chain" id="PRO_1000054502" description="Large ribosomal subunit protein uL15">
    <location>
        <begin position="1"/>
        <end position="133"/>
    </location>
</feature>
<feature type="region of interest" description="Disordered" evidence="2">
    <location>
        <begin position="1"/>
        <end position="62"/>
    </location>
</feature>
<feature type="compositionally biased region" description="Polar residues" evidence="2">
    <location>
        <begin position="32"/>
        <end position="45"/>
    </location>
</feature>
<reference key="1">
    <citation type="journal article" date="2007" name="Proc. Natl. Acad. Sci. U.S.A.">
        <title>Deep-sea vent epsilon-proteobacterial genomes provide insights into emergence of pathogens.</title>
        <authorList>
            <person name="Nakagawa S."/>
            <person name="Takaki Y."/>
            <person name="Shimamura S."/>
            <person name="Reysenbach A.-L."/>
            <person name="Takai K."/>
            <person name="Horikoshi K."/>
        </authorList>
    </citation>
    <scope>NUCLEOTIDE SEQUENCE [LARGE SCALE GENOMIC DNA]</scope>
    <source>
        <strain>SB155-2</strain>
    </source>
</reference>
<gene>
    <name evidence="1" type="primary">rplO</name>
    <name type="ordered locus">NIS_0241</name>
</gene>
<proteinExistence type="inferred from homology"/>
<evidence type="ECO:0000255" key="1">
    <source>
        <dbReference type="HAMAP-Rule" id="MF_01341"/>
    </source>
</evidence>
<evidence type="ECO:0000256" key="2">
    <source>
        <dbReference type="SAM" id="MobiDB-lite"/>
    </source>
</evidence>
<evidence type="ECO:0000305" key="3"/>
<keyword id="KW-1185">Reference proteome</keyword>
<keyword id="KW-0687">Ribonucleoprotein</keyword>
<keyword id="KW-0689">Ribosomal protein</keyword>
<keyword id="KW-0694">RNA-binding</keyword>
<keyword id="KW-0699">rRNA-binding</keyword>
<dbReference type="EMBL" id="AP009178">
    <property type="protein sequence ID" value="BAF69355.1"/>
    <property type="molecule type" value="Genomic_DNA"/>
</dbReference>
<dbReference type="RefSeq" id="WP_012081618.1">
    <property type="nucleotide sequence ID" value="NC_009662.1"/>
</dbReference>
<dbReference type="SMR" id="A6Q1J6"/>
<dbReference type="STRING" id="387092.NIS_0241"/>
<dbReference type="KEGG" id="nis:NIS_0241"/>
<dbReference type="eggNOG" id="COG0200">
    <property type="taxonomic scope" value="Bacteria"/>
</dbReference>
<dbReference type="HOGENOM" id="CLU_055188_6_0_7"/>
<dbReference type="InParanoid" id="A6Q1J6"/>
<dbReference type="OrthoDB" id="9810293at2"/>
<dbReference type="Proteomes" id="UP000001118">
    <property type="component" value="Chromosome"/>
</dbReference>
<dbReference type="GO" id="GO:0022625">
    <property type="term" value="C:cytosolic large ribosomal subunit"/>
    <property type="evidence" value="ECO:0007669"/>
    <property type="project" value="TreeGrafter"/>
</dbReference>
<dbReference type="GO" id="GO:0019843">
    <property type="term" value="F:rRNA binding"/>
    <property type="evidence" value="ECO:0007669"/>
    <property type="project" value="UniProtKB-UniRule"/>
</dbReference>
<dbReference type="GO" id="GO:0003735">
    <property type="term" value="F:structural constituent of ribosome"/>
    <property type="evidence" value="ECO:0007669"/>
    <property type="project" value="InterPro"/>
</dbReference>
<dbReference type="GO" id="GO:0006412">
    <property type="term" value="P:translation"/>
    <property type="evidence" value="ECO:0007669"/>
    <property type="project" value="UniProtKB-UniRule"/>
</dbReference>
<dbReference type="HAMAP" id="MF_01341">
    <property type="entry name" value="Ribosomal_uL15"/>
    <property type="match status" value="1"/>
</dbReference>
<dbReference type="InterPro" id="IPR030878">
    <property type="entry name" value="Ribosomal_uL15"/>
</dbReference>
<dbReference type="InterPro" id="IPR036227">
    <property type="entry name" value="Ribosomal_uL15/eL18_sf"/>
</dbReference>
<dbReference type="InterPro" id="IPR005749">
    <property type="entry name" value="Ribosomal_uL15_bac-type"/>
</dbReference>
<dbReference type="NCBIfam" id="TIGR01071">
    <property type="entry name" value="rplO_bact"/>
    <property type="match status" value="1"/>
</dbReference>
<dbReference type="PANTHER" id="PTHR12934">
    <property type="entry name" value="50S RIBOSOMAL PROTEIN L15"/>
    <property type="match status" value="1"/>
</dbReference>
<dbReference type="PANTHER" id="PTHR12934:SF11">
    <property type="entry name" value="LARGE RIBOSOMAL SUBUNIT PROTEIN UL15M"/>
    <property type="match status" value="1"/>
</dbReference>
<dbReference type="SUPFAM" id="SSF52080">
    <property type="entry name" value="Ribosomal proteins L15p and L18e"/>
    <property type="match status" value="1"/>
</dbReference>
<name>RL15_NITSB</name>
<sequence>MALHNLQPAPGSTHKTKRVGRGQGSGMGKTATRGQKGQKSRTGYSQKRGFEGGQQPLQRRLPKIGFTSNVVKPHAINVDKVKKVAQLEEITMETIRSVYKLPKYVTRVKLIGSSVQEIVSKIKDDNISYSGQK</sequence>
<accession>A6Q1J6</accession>
<comment type="function">
    <text evidence="1">Binds to the 23S rRNA.</text>
</comment>
<comment type="subunit">
    <text evidence="1">Part of the 50S ribosomal subunit.</text>
</comment>
<comment type="similarity">
    <text evidence="1">Belongs to the universal ribosomal protein uL15 family.</text>
</comment>
<protein>
    <recommendedName>
        <fullName evidence="1">Large ribosomal subunit protein uL15</fullName>
    </recommendedName>
    <alternativeName>
        <fullName evidence="3">50S ribosomal protein L15</fullName>
    </alternativeName>
</protein>